<protein>
    <recommendedName>
        <fullName>Phosphoglucomutase</fullName>
        <shortName>PGM</shortName>
        <ecNumber>5.4.2.2</ecNumber>
    </recommendedName>
    <alternativeName>
        <fullName>Alpha-phosphoglucomutase</fullName>
    </alternativeName>
    <alternativeName>
        <fullName>Glucose phosphomutase</fullName>
    </alternativeName>
</protein>
<sequence>MKGCLATMDKELWIKRANDSLVKHFYEQQSDIEQREGFESKLTFGTAGIRGKFGLGEGRLNKFTIEKLALGLARYLNAQTNNPTIVIHYDIRHLSTEFAQIIANVLANHQIIVYLPDTYKTTPELSFAVRNLNTTAGIMITASHNPKDYNGIKVYSSDGAQLSTDASELVSRYIEEVGDPLQIDIPISKQNTSYIKPFPKSVTDDYMKHIQNMIGYIPKSDLQVVFTSLHGTSVPIVPELLKSLNFNQFNLVEAQCKPDPNFSSVQSANPEDHRAFDQAVELANKSHADLLISTDPDADRLGIAERDAHGHITYFNGNQIGALLLNYRIQQTSQLRHRLMIQSIVSSELTKSLARYNNVEYKEVLTGFKFIAQEIRQLDDHQNMIFAFEESYGFLSEPFVRDKDAVQIVPLIIKYASELKLYGKTLKDELEQIYQTVGRHEDTLFSHTLEGLEGKKKIESIMTHFRSNPPQEIQGLKVKAIEDYLTSEVYQLDKDTTSQIDSPKSNVIRVLFDEGFIALRPSGTEPKIKLYVSLKCPDFDDVAQKINAMIFS</sequence>
<accession>Q6GDU9</accession>
<keyword id="KW-0119">Carbohydrate metabolism</keyword>
<keyword id="KW-0313">Glucose metabolism</keyword>
<keyword id="KW-0413">Isomerase</keyword>
<keyword id="KW-0460">Magnesium</keyword>
<keyword id="KW-0479">Metal-binding</keyword>
<keyword id="KW-0597">Phosphoprotein</keyword>
<reference key="1">
    <citation type="journal article" date="2004" name="Proc. Natl. Acad. Sci. U.S.A.">
        <title>Complete genomes of two clinical Staphylococcus aureus strains: evidence for the rapid evolution of virulence and drug resistance.</title>
        <authorList>
            <person name="Holden M.T.G."/>
            <person name="Feil E.J."/>
            <person name="Lindsay J.A."/>
            <person name="Peacock S.J."/>
            <person name="Day N.P.J."/>
            <person name="Enright M.C."/>
            <person name="Foster T.J."/>
            <person name="Moore C.E."/>
            <person name="Hurst L."/>
            <person name="Atkin R."/>
            <person name="Barron A."/>
            <person name="Bason N."/>
            <person name="Bentley S.D."/>
            <person name="Chillingworth C."/>
            <person name="Chillingworth T."/>
            <person name="Churcher C."/>
            <person name="Clark L."/>
            <person name="Corton C."/>
            <person name="Cronin A."/>
            <person name="Doggett J."/>
            <person name="Dowd L."/>
            <person name="Feltwell T."/>
            <person name="Hance Z."/>
            <person name="Harris B."/>
            <person name="Hauser H."/>
            <person name="Holroyd S."/>
            <person name="Jagels K."/>
            <person name="James K.D."/>
            <person name="Lennard N."/>
            <person name="Line A."/>
            <person name="Mayes R."/>
            <person name="Moule S."/>
            <person name="Mungall K."/>
            <person name="Ormond D."/>
            <person name="Quail M.A."/>
            <person name="Rabbinowitsch E."/>
            <person name="Rutherford K.M."/>
            <person name="Sanders M."/>
            <person name="Sharp S."/>
            <person name="Simmonds M."/>
            <person name="Stevens K."/>
            <person name="Whitehead S."/>
            <person name="Barrell B.G."/>
            <person name="Spratt B.G."/>
            <person name="Parkhill J."/>
        </authorList>
    </citation>
    <scope>NUCLEOTIDE SEQUENCE [LARGE SCALE GENOMIC DNA]</scope>
    <source>
        <strain>MRSA252</strain>
    </source>
</reference>
<evidence type="ECO:0000250" key="1"/>
<evidence type="ECO:0000305" key="2"/>
<proteinExistence type="inferred from homology"/>
<comment type="function">
    <text evidence="1">Catalyzes the interconversion between glucose-6-phosphate and alpha-glucose-1-phosphate. This is the first step in the biosynthesis of diglucosyl-diacylglycerol (Glc2-DAG), i.e. the predominant glycolipid found in the S.aureus membrane, which is also used as a membrane anchor for lipoteichoic acid (LTA) (By similarity).</text>
</comment>
<comment type="catalytic activity">
    <reaction>
        <text>alpha-D-glucose 1-phosphate = alpha-D-glucose 6-phosphate</text>
        <dbReference type="Rhea" id="RHEA:23536"/>
        <dbReference type="ChEBI" id="CHEBI:58225"/>
        <dbReference type="ChEBI" id="CHEBI:58601"/>
        <dbReference type="EC" id="5.4.2.2"/>
    </reaction>
</comment>
<comment type="cofactor">
    <cofactor evidence="1">
        <name>Mg(2+)</name>
        <dbReference type="ChEBI" id="CHEBI:18420"/>
    </cofactor>
    <text evidence="1">Binds 1 Mg(2+) ion per subunit.</text>
</comment>
<comment type="pathway">
    <text>Glycolipid metabolism; diglucosyl-diacylglycerol biosynthesis.</text>
</comment>
<comment type="similarity">
    <text evidence="2">Belongs to the phosphohexose mutase family.</text>
</comment>
<organism>
    <name type="scientific">Staphylococcus aureus (strain MRSA252)</name>
    <dbReference type="NCBI Taxonomy" id="282458"/>
    <lineage>
        <taxon>Bacteria</taxon>
        <taxon>Bacillati</taxon>
        <taxon>Bacillota</taxon>
        <taxon>Bacilli</taxon>
        <taxon>Bacillales</taxon>
        <taxon>Staphylococcaceae</taxon>
        <taxon>Staphylococcus</taxon>
    </lineage>
</organism>
<gene>
    <name type="primary">pgcA</name>
    <name type="ordered locus">SAR2576</name>
</gene>
<name>PGCA_STAAR</name>
<dbReference type="EC" id="5.4.2.2"/>
<dbReference type="EMBL" id="BX571856">
    <property type="protein sequence ID" value="CAG41556.1"/>
    <property type="molecule type" value="Genomic_DNA"/>
</dbReference>
<dbReference type="SMR" id="Q6GDU9"/>
<dbReference type="KEGG" id="sar:SAR2576"/>
<dbReference type="HOGENOM" id="CLU_016950_0_0_9"/>
<dbReference type="UniPathway" id="UPA00894"/>
<dbReference type="Proteomes" id="UP000000596">
    <property type="component" value="Chromosome"/>
</dbReference>
<dbReference type="GO" id="GO:0000287">
    <property type="term" value="F:magnesium ion binding"/>
    <property type="evidence" value="ECO:0007669"/>
    <property type="project" value="InterPro"/>
</dbReference>
<dbReference type="GO" id="GO:0004614">
    <property type="term" value="F:phosphoglucomutase activity"/>
    <property type="evidence" value="ECO:0007669"/>
    <property type="project" value="UniProtKB-EC"/>
</dbReference>
<dbReference type="GO" id="GO:0008973">
    <property type="term" value="F:phosphopentomutase activity"/>
    <property type="evidence" value="ECO:0007669"/>
    <property type="project" value="TreeGrafter"/>
</dbReference>
<dbReference type="GO" id="GO:0009246">
    <property type="term" value="P:enterobacterial common antigen biosynthetic process"/>
    <property type="evidence" value="ECO:0007669"/>
    <property type="project" value="UniProtKB-UniPathway"/>
</dbReference>
<dbReference type="GO" id="GO:0006006">
    <property type="term" value="P:glucose metabolic process"/>
    <property type="evidence" value="ECO:0007669"/>
    <property type="project" value="UniProtKB-KW"/>
</dbReference>
<dbReference type="GO" id="GO:0006166">
    <property type="term" value="P:purine ribonucleoside salvage"/>
    <property type="evidence" value="ECO:0007669"/>
    <property type="project" value="TreeGrafter"/>
</dbReference>
<dbReference type="CDD" id="cd05799">
    <property type="entry name" value="PGM2"/>
    <property type="match status" value="1"/>
</dbReference>
<dbReference type="Gene3D" id="3.40.120.10">
    <property type="entry name" value="Alpha-D-Glucose-1,6-Bisphosphate, subunit A, domain 3"/>
    <property type="match status" value="3"/>
</dbReference>
<dbReference type="Gene3D" id="3.30.310.50">
    <property type="entry name" value="Alpha-D-phosphohexomutase, C-terminal domain"/>
    <property type="match status" value="1"/>
</dbReference>
<dbReference type="InterPro" id="IPR005844">
    <property type="entry name" value="A-D-PHexomutase_a/b/a-I"/>
</dbReference>
<dbReference type="InterPro" id="IPR016055">
    <property type="entry name" value="A-D-PHexomutase_a/b/a-I/II/III"/>
</dbReference>
<dbReference type="InterPro" id="IPR005845">
    <property type="entry name" value="A-D-PHexomutase_a/b/a-II"/>
</dbReference>
<dbReference type="InterPro" id="IPR005846">
    <property type="entry name" value="A-D-PHexomutase_a/b/a-III"/>
</dbReference>
<dbReference type="InterPro" id="IPR005843">
    <property type="entry name" value="A-D-PHexomutase_C"/>
</dbReference>
<dbReference type="InterPro" id="IPR036900">
    <property type="entry name" value="A-D-PHexomutase_C_sf"/>
</dbReference>
<dbReference type="InterPro" id="IPR016066">
    <property type="entry name" value="A-D-PHexomutase_CS"/>
</dbReference>
<dbReference type="InterPro" id="IPR005841">
    <property type="entry name" value="Alpha-D-phosphohexomutase_SF"/>
</dbReference>
<dbReference type="PANTHER" id="PTHR45745:SF1">
    <property type="entry name" value="PHOSPHOGLUCOMUTASE 2B-RELATED"/>
    <property type="match status" value="1"/>
</dbReference>
<dbReference type="PANTHER" id="PTHR45745">
    <property type="entry name" value="PHOSPHOMANNOMUTASE 45A"/>
    <property type="match status" value="1"/>
</dbReference>
<dbReference type="Pfam" id="PF02878">
    <property type="entry name" value="PGM_PMM_I"/>
    <property type="match status" value="1"/>
</dbReference>
<dbReference type="Pfam" id="PF02879">
    <property type="entry name" value="PGM_PMM_II"/>
    <property type="match status" value="1"/>
</dbReference>
<dbReference type="Pfam" id="PF02880">
    <property type="entry name" value="PGM_PMM_III"/>
    <property type="match status" value="1"/>
</dbReference>
<dbReference type="Pfam" id="PF00408">
    <property type="entry name" value="PGM_PMM_IV"/>
    <property type="match status" value="1"/>
</dbReference>
<dbReference type="PRINTS" id="PR00509">
    <property type="entry name" value="PGMPMM"/>
</dbReference>
<dbReference type="SUPFAM" id="SSF55957">
    <property type="entry name" value="Phosphoglucomutase, C-terminal domain"/>
    <property type="match status" value="1"/>
</dbReference>
<dbReference type="SUPFAM" id="SSF53738">
    <property type="entry name" value="Phosphoglucomutase, first 3 domains"/>
    <property type="match status" value="3"/>
</dbReference>
<dbReference type="PROSITE" id="PS00710">
    <property type="entry name" value="PGM_PMM"/>
    <property type="match status" value="1"/>
</dbReference>
<feature type="chain" id="PRO_0000308342" description="Phosphoglucomutase">
    <location>
        <begin position="1"/>
        <end position="552"/>
    </location>
</feature>
<feature type="active site" description="Phosphoserine intermediate" evidence="1">
    <location>
        <position position="143"/>
    </location>
</feature>
<feature type="binding site" description="via phosphate group" evidence="1">
    <location>
        <position position="143"/>
    </location>
    <ligand>
        <name>Mg(2+)</name>
        <dbReference type="ChEBI" id="CHEBI:18420"/>
    </ligand>
</feature>
<feature type="binding site" evidence="1">
    <location>
        <position position="295"/>
    </location>
    <ligand>
        <name>Mg(2+)</name>
        <dbReference type="ChEBI" id="CHEBI:18420"/>
    </ligand>
</feature>
<feature type="binding site" evidence="1">
    <location>
        <position position="297"/>
    </location>
    <ligand>
        <name>Mg(2+)</name>
        <dbReference type="ChEBI" id="CHEBI:18420"/>
    </ligand>
</feature>
<feature type="binding site" evidence="1">
    <location>
        <position position="299"/>
    </location>
    <ligand>
        <name>Mg(2+)</name>
        <dbReference type="ChEBI" id="CHEBI:18420"/>
    </ligand>
</feature>